<keyword id="KW-0227">DNA damage</keyword>
<keyword id="KW-0234">DNA repair</keyword>
<keyword id="KW-0235">DNA replication</keyword>
<keyword id="KW-0238">DNA-binding</keyword>
<keyword id="KW-0239">DNA-directed DNA polymerase</keyword>
<keyword id="KW-0269">Exonuclease</keyword>
<keyword id="KW-0378">Hydrolase</keyword>
<keyword id="KW-0540">Nuclease</keyword>
<keyword id="KW-0548">Nucleotidyltransferase</keyword>
<keyword id="KW-1185">Reference proteome</keyword>
<keyword id="KW-0808">Transferase</keyword>
<reference key="1">
    <citation type="journal article" date="2003" name="Proc. Natl. Acad. Sci. U.S.A.">
        <title>The complete genome sequence of Mycobacterium bovis.</title>
        <authorList>
            <person name="Garnier T."/>
            <person name="Eiglmeier K."/>
            <person name="Camus J.-C."/>
            <person name="Medina N."/>
            <person name="Mansoor H."/>
            <person name="Pryor M."/>
            <person name="Duthoy S."/>
            <person name="Grondin S."/>
            <person name="Lacroix C."/>
            <person name="Monsempe C."/>
            <person name="Simon S."/>
            <person name="Harris B."/>
            <person name="Atkin R."/>
            <person name="Doggett J."/>
            <person name="Mayes R."/>
            <person name="Keating L."/>
            <person name="Wheeler P.R."/>
            <person name="Parkhill J."/>
            <person name="Barrell B.G."/>
            <person name="Cole S.T."/>
            <person name="Gordon S.V."/>
            <person name="Hewinson R.G."/>
        </authorList>
    </citation>
    <scope>NUCLEOTIDE SEQUENCE [LARGE SCALE GENOMIC DNA]</scope>
    <source>
        <strain>ATCC BAA-935 / AF2122/97</strain>
    </source>
</reference>
<reference key="2">
    <citation type="journal article" date="2017" name="Genome Announc.">
        <title>Updated reference genome sequence and annotation of Mycobacterium bovis AF2122/97.</title>
        <authorList>
            <person name="Malone K.M."/>
            <person name="Farrell D."/>
            <person name="Stuber T.P."/>
            <person name="Schubert O.T."/>
            <person name="Aebersold R."/>
            <person name="Robbe-Austerman S."/>
            <person name="Gordon S.V."/>
        </authorList>
    </citation>
    <scope>NUCLEOTIDE SEQUENCE [LARGE SCALE GENOMIC DNA]</scope>
    <scope>GENOME REANNOTATION</scope>
    <source>
        <strain>ATCC BAA-935 / AF2122/97</strain>
    </source>
</reference>
<evidence type="ECO:0000255" key="1"/>
<evidence type="ECO:0000305" key="2"/>
<accession>P0A551</accession>
<accession>A0A1R3XYV9</accession>
<accession>Q07700</accession>
<accession>X2BIE3</accession>
<gene>
    <name type="primary">polA</name>
    <name type="ordered locus">BQ2027_MB1655</name>
</gene>
<name>DPO1_MYCBO</name>
<comment type="function">
    <text>In addition to polymerase activity, this DNA polymerase exhibits 3'-5' and 5'-3' exonuclease activity.</text>
</comment>
<comment type="catalytic activity">
    <reaction>
        <text>DNA(n) + a 2'-deoxyribonucleoside 5'-triphosphate = DNA(n+1) + diphosphate</text>
        <dbReference type="Rhea" id="RHEA:22508"/>
        <dbReference type="Rhea" id="RHEA-COMP:17339"/>
        <dbReference type="Rhea" id="RHEA-COMP:17340"/>
        <dbReference type="ChEBI" id="CHEBI:33019"/>
        <dbReference type="ChEBI" id="CHEBI:61560"/>
        <dbReference type="ChEBI" id="CHEBI:173112"/>
        <dbReference type="EC" id="2.7.7.7"/>
    </reaction>
</comment>
<comment type="subunit">
    <text>Single-chain monomer with multiple functions.</text>
</comment>
<comment type="similarity">
    <text evidence="2">Belongs to the DNA polymerase type-A family.</text>
</comment>
<proteinExistence type="inferred from homology"/>
<sequence length="904" mass="98472">MVTTASAPSEDRAKPTLMLLDGNSLAFRAFYALPAENFKTRGGLTTNAVYGFTAMLINLLRDEAPTHIAAAFDVSRQTFRLQRYPEYKANRSSTPDEFAGQIDITKEVLGALGITVLSEPGFEADDLIATLATQAENEGYRVLVVTGDRDALQLVSDDVTVLYPRKGVSELTRFTPEAVVEKYGLTPRQYPDFAALRGDPSDNLPGIPGVGEKTAAKWIAEYGSLRSLVDNVDAVRGKVGDALRANLASVVRNRELTDLVRDVPLAQTPDTLRLQPWDRDHIHRLFDDLEFRVLRDRLFDTLAAAGGPEVDEGFDVRGGALAPGTVRQWLAEHAGDGRRAGLTVVGTHLPHGGDATAMAVAAADGEGAYLDTATLTPDDDAALAAWLADPAKPKALHEAKAAVHDLAGRGWTLEGVTSDTALAAYLVRPGQRSFTLDDLSLRYLRRELRAETPQQQQLSLLDDDDTDAETIQTTILRARAVIDLADALDAELARIDSTALLGEMELPVQRVLAKMESAGIAVDLPMLTELQSQFGDQIRDAAEAAYGVIGKQINLGSPKQLQVVLFDELGMPKTKRTKTGYTTDADALQSLFDKTGHPFLQHLLAHRDVTRLKVTVDGLLQAVAADGRIHTTFNQTIAATGRLSSTEPNLQNIPIRTDAGRRIRDAFVVGDGYAELMTADYSQIEMRIMAHLSGDEGLIEAFNTGEDLHSFVASRAFGVPIDEVTGELRRRVKAMSYGLAYGLSAYGLSQQLKISTEEANEQMDAYFARFGGVRDYLRAVVERARKDGYTSTVLGRRRYLPELDSSNRQVREAAERAALNAPIQGSAADIIKVAMIQVDKALNEAQLASRMLLQVHDELLFEIAPGERERVEALVRDKMGGAYPLDVPLEVSVGYGRSWDAAAH</sequence>
<protein>
    <recommendedName>
        <fullName>DNA polymerase I</fullName>
        <shortName>POL I</shortName>
        <ecNumber>2.7.7.7</ecNumber>
    </recommendedName>
</protein>
<dbReference type="EC" id="2.7.7.7"/>
<dbReference type="EMBL" id="LT708304">
    <property type="protein sequence ID" value="SIU00259.1"/>
    <property type="molecule type" value="Genomic_DNA"/>
</dbReference>
<dbReference type="RefSeq" id="NP_855308.1">
    <property type="nucleotide sequence ID" value="NC_002945.3"/>
</dbReference>
<dbReference type="RefSeq" id="WP_003408063.1">
    <property type="nucleotide sequence ID" value="NC_002945.4"/>
</dbReference>
<dbReference type="SMR" id="P0A551"/>
<dbReference type="KEGG" id="mbo:BQ2027_MB1655"/>
<dbReference type="PATRIC" id="fig|233413.5.peg.1806"/>
<dbReference type="Proteomes" id="UP000001419">
    <property type="component" value="Chromosome"/>
</dbReference>
<dbReference type="GO" id="GO:0008408">
    <property type="term" value="F:3'-5' exonuclease activity"/>
    <property type="evidence" value="ECO:0007669"/>
    <property type="project" value="InterPro"/>
</dbReference>
<dbReference type="GO" id="GO:0008409">
    <property type="term" value="F:5'-3' exonuclease activity"/>
    <property type="evidence" value="ECO:0007669"/>
    <property type="project" value="InterPro"/>
</dbReference>
<dbReference type="GO" id="GO:0003677">
    <property type="term" value="F:DNA binding"/>
    <property type="evidence" value="ECO:0007669"/>
    <property type="project" value="UniProtKB-KW"/>
</dbReference>
<dbReference type="GO" id="GO:0003887">
    <property type="term" value="F:DNA-directed DNA polymerase activity"/>
    <property type="evidence" value="ECO:0007669"/>
    <property type="project" value="UniProtKB-KW"/>
</dbReference>
<dbReference type="GO" id="GO:0006261">
    <property type="term" value="P:DNA-templated DNA replication"/>
    <property type="evidence" value="ECO:0007669"/>
    <property type="project" value="InterPro"/>
</dbReference>
<dbReference type="GO" id="GO:0006302">
    <property type="term" value="P:double-strand break repair"/>
    <property type="evidence" value="ECO:0007669"/>
    <property type="project" value="TreeGrafter"/>
</dbReference>
<dbReference type="CDD" id="cd08637">
    <property type="entry name" value="DNA_pol_A_pol_I_C"/>
    <property type="match status" value="1"/>
</dbReference>
<dbReference type="CDD" id="cd06140">
    <property type="entry name" value="DNA_polA_I_Bacillus_like_exo"/>
    <property type="match status" value="1"/>
</dbReference>
<dbReference type="CDD" id="cd09898">
    <property type="entry name" value="H3TH_53EXO"/>
    <property type="match status" value="1"/>
</dbReference>
<dbReference type="CDD" id="cd09859">
    <property type="entry name" value="PIN_53EXO"/>
    <property type="match status" value="1"/>
</dbReference>
<dbReference type="FunFam" id="1.10.150.20:FF:000002">
    <property type="entry name" value="DNA polymerase I"/>
    <property type="match status" value="1"/>
</dbReference>
<dbReference type="FunFam" id="1.10.150.20:FF:000003">
    <property type="entry name" value="DNA polymerase I"/>
    <property type="match status" value="1"/>
</dbReference>
<dbReference type="FunFam" id="1.20.1060.10:FF:000001">
    <property type="entry name" value="DNA polymerase I"/>
    <property type="match status" value="1"/>
</dbReference>
<dbReference type="FunFam" id="3.40.50.1010:FF:000001">
    <property type="entry name" value="DNA polymerase I"/>
    <property type="match status" value="1"/>
</dbReference>
<dbReference type="Gene3D" id="3.30.70.370">
    <property type="match status" value="1"/>
</dbReference>
<dbReference type="Gene3D" id="1.10.150.20">
    <property type="entry name" value="5' to 3' exonuclease, C-terminal subdomain"/>
    <property type="match status" value="2"/>
</dbReference>
<dbReference type="Gene3D" id="3.40.50.1010">
    <property type="entry name" value="5'-nuclease"/>
    <property type="match status" value="1"/>
</dbReference>
<dbReference type="Gene3D" id="3.30.420.10">
    <property type="entry name" value="Ribonuclease H-like superfamily/Ribonuclease H"/>
    <property type="match status" value="1"/>
</dbReference>
<dbReference type="Gene3D" id="1.20.1060.10">
    <property type="entry name" value="Taq DNA Polymerase, Chain T, domain 4"/>
    <property type="match status" value="1"/>
</dbReference>
<dbReference type="InterPro" id="IPR002562">
    <property type="entry name" value="3'-5'_exonuclease_dom"/>
</dbReference>
<dbReference type="InterPro" id="IPR020046">
    <property type="entry name" value="5-3_exonucl_a-hlix_arch_N"/>
</dbReference>
<dbReference type="InterPro" id="IPR002421">
    <property type="entry name" value="5-3_exonuclease"/>
</dbReference>
<dbReference type="InterPro" id="IPR036279">
    <property type="entry name" value="5-3_exonuclease_C_sf"/>
</dbReference>
<dbReference type="InterPro" id="IPR019760">
    <property type="entry name" value="DNA-dir_DNA_pol_A_CS"/>
</dbReference>
<dbReference type="InterPro" id="IPR001098">
    <property type="entry name" value="DNA-dir_DNA_pol_A_palm_dom"/>
</dbReference>
<dbReference type="InterPro" id="IPR043502">
    <property type="entry name" value="DNA/RNA_pol_sf"/>
</dbReference>
<dbReference type="InterPro" id="IPR054690">
    <property type="entry name" value="DNA_polI_exonuclease"/>
</dbReference>
<dbReference type="InterPro" id="IPR020045">
    <property type="entry name" value="DNA_polI_H3TH"/>
</dbReference>
<dbReference type="InterPro" id="IPR018320">
    <property type="entry name" value="DNA_polymerase_1"/>
</dbReference>
<dbReference type="InterPro" id="IPR002298">
    <property type="entry name" value="DNA_polymerase_A"/>
</dbReference>
<dbReference type="InterPro" id="IPR008918">
    <property type="entry name" value="HhH2"/>
</dbReference>
<dbReference type="InterPro" id="IPR029060">
    <property type="entry name" value="PIN-like_dom_sf"/>
</dbReference>
<dbReference type="InterPro" id="IPR012337">
    <property type="entry name" value="RNaseH-like_sf"/>
</dbReference>
<dbReference type="InterPro" id="IPR036397">
    <property type="entry name" value="RNaseH_sf"/>
</dbReference>
<dbReference type="NCBIfam" id="TIGR00593">
    <property type="entry name" value="pola"/>
    <property type="match status" value="1"/>
</dbReference>
<dbReference type="NCBIfam" id="NF004397">
    <property type="entry name" value="PRK05755.1"/>
    <property type="match status" value="1"/>
</dbReference>
<dbReference type="PANTHER" id="PTHR10133">
    <property type="entry name" value="DNA POLYMERASE I"/>
    <property type="match status" value="1"/>
</dbReference>
<dbReference type="PANTHER" id="PTHR10133:SF27">
    <property type="entry name" value="DNA POLYMERASE NU"/>
    <property type="match status" value="1"/>
</dbReference>
<dbReference type="Pfam" id="PF01367">
    <property type="entry name" value="5_3_exonuc"/>
    <property type="match status" value="1"/>
</dbReference>
<dbReference type="Pfam" id="PF02739">
    <property type="entry name" value="5_3_exonuc_N"/>
    <property type="match status" value="1"/>
</dbReference>
<dbReference type="Pfam" id="PF00476">
    <property type="entry name" value="DNA_pol_A"/>
    <property type="match status" value="1"/>
</dbReference>
<dbReference type="Pfam" id="PF22619">
    <property type="entry name" value="DNA_polI_exo1"/>
    <property type="match status" value="1"/>
</dbReference>
<dbReference type="PRINTS" id="PR00868">
    <property type="entry name" value="DNAPOLI"/>
</dbReference>
<dbReference type="SMART" id="SM00474">
    <property type="entry name" value="35EXOc"/>
    <property type="match status" value="1"/>
</dbReference>
<dbReference type="SMART" id="SM00475">
    <property type="entry name" value="53EXOc"/>
    <property type="match status" value="1"/>
</dbReference>
<dbReference type="SMART" id="SM00279">
    <property type="entry name" value="HhH2"/>
    <property type="match status" value="1"/>
</dbReference>
<dbReference type="SMART" id="SM00482">
    <property type="entry name" value="POLAc"/>
    <property type="match status" value="1"/>
</dbReference>
<dbReference type="SUPFAM" id="SSF47807">
    <property type="entry name" value="5' to 3' exonuclease, C-terminal subdomain"/>
    <property type="match status" value="1"/>
</dbReference>
<dbReference type="SUPFAM" id="SSF56672">
    <property type="entry name" value="DNA/RNA polymerases"/>
    <property type="match status" value="1"/>
</dbReference>
<dbReference type="SUPFAM" id="SSF88723">
    <property type="entry name" value="PIN domain-like"/>
    <property type="match status" value="1"/>
</dbReference>
<dbReference type="SUPFAM" id="SSF53098">
    <property type="entry name" value="Ribonuclease H-like"/>
    <property type="match status" value="1"/>
</dbReference>
<dbReference type="PROSITE" id="PS00447">
    <property type="entry name" value="DNA_POLYMERASE_A"/>
    <property type="match status" value="1"/>
</dbReference>
<organism>
    <name type="scientific">Mycobacterium bovis (strain ATCC BAA-935 / AF2122/97)</name>
    <dbReference type="NCBI Taxonomy" id="233413"/>
    <lineage>
        <taxon>Bacteria</taxon>
        <taxon>Bacillati</taxon>
        <taxon>Actinomycetota</taxon>
        <taxon>Actinomycetes</taxon>
        <taxon>Mycobacteriales</taxon>
        <taxon>Mycobacteriaceae</taxon>
        <taxon>Mycobacterium</taxon>
        <taxon>Mycobacterium tuberculosis complex</taxon>
    </lineage>
</organism>
<feature type="chain" id="PRO_0000101245" description="DNA polymerase I">
    <location>
        <begin position="1"/>
        <end position="904"/>
    </location>
</feature>
<feature type="domain" description="5'-3' exonuclease" evidence="1">
    <location>
        <begin position="186"/>
        <end position="279"/>
    </location>
</feature>
<feature type="domain" description="3'-5' exonuclease" evidence="1">
    <location>
        <begin position="317"/>
        <end position="493"/>
    </location>
</feature>